<organism>
    <name type="scientific">Acanthamoeba polyphaga mimivirus</name>
    <name type="common">APMV</name>
    <dbReference type="NCBI Taxonomy" id="212035"/>
    <lineage>
        <taxon>Viruses</taxon>
        <taxon>Varidnaviria</taxon>
        <taxon>Bamfordvirae</taxon>
        <taxon>Nucleocytoviricota</taxon>
        <taxon>Megaviricetes</taxon>
        <taxon>Imitervirales</taxon>
        <taxon>Mimiviridae</taxon>
        <taxon>Megamimivirinae</taxon>
        <taxon>Mimivirus</taxon>
        <taxon>Mimivirus bradfordmassiliense</taxon>
    </lineage>
</organism>
<protein>
    <recommendedName>
        <fullName>HMG box-containing protein R545</fullName>
    </recommendedName>
</protein>
<accession>Q5UQA4</accession>
<dbReference type="EMBL" id="AY653733">
    <property type="protein sequence ID" value="AAV50809.1"/>
    <property type="molecule type" value="Genomic_DNA"/>
</dbReference>
<dbReference type="SMR" id="Q5UQA4"/>
<dbReference type="KEGG" id="vg:9925179"/>
<dbReference type="Proteomes" id="UP000001134">
    <property type="component" value="Genome"/>
</dbReference>
<dbReference type="GO" id="GO:0003677">
    <property type="term" value="F:DNA binding"/>
    <property type="evidence" value="ECO:0007669"/>
    <property type="project" value="UniProtKB-KW"/>
</dbReference>
<dbReference type="Gene3D" id="1.10.30.10">
    <property type="entry name" value="High mobility group box domain"/>
    <property type="match status" value="1"/>
</dbReference>
<dbReference type="InterPro" id="IPR009071">
    <property type="entry name" value="HMG_box_dom"/>
</dbReference>
<dbReference type="InterPro" id="IPR036910">
    <property type="entry name" value="HMG_box_dom_sf"/>
</dbReference>
<dbReference type="SUPFAM" id="SSF47095">
    <property type="entry name" value="HMG-box"/>
    <property type="match status" value="1"/>
</dbReference>
<dbReference type="PROSITE" id="PS50118">
    <property type="entry name" value="HMG_BOX_2"/>
    <property type="match status" value="1"/>
</dbReference>
<organismHost>
    <name type="scientific">Acanthamoeba polyphaga</name>
    <name type="common">Amoeba</name>
    <dbReference type="NCBI Taxonomy" id="5757"/>
</organismHost>
<gene>
    <name type="ordered locus">MIMI_R545</name>
</gene>
<reference key="1">
    <citation type="journal article" date="2004" name="Science">
        <title>The 1.2-megabase genome sequence of Mimivirus.</title>
        <authorList>
            <person name="Raoult D."/>
            <person name="Audic S."/>
            <person name="Robert C."/>
            <person name="Abergel C."/>
            <person name="Renesto P."/>
            <person name="Ogata H."/>
            <person name="La Scola B."/>
            <person name="Susan M."/>
            <person name="Claverie J.-M."/>
        </authorList>
    </citation>
    <scope>NUCLEOTIDE SEQUENCE [LARGE SCALE GENOMIC DNA]</scope>
    <source>
        <strain>Rowbotham-Bradford</strain>
    </source>
</reference>
<feature type="chain" id="PRO_0000253993" description="HMG box-containing protein R545">
    <location>
        <begin position="1"/>
        <end position="282"/>
    </location>
</feature>
<feature type="DNA-binding region" description="HMG box" evidence="1">
    <location>
        <begin position="183"/>
        <end position="252"/>
    </location>
</feature>
<feature type="region of interest" description="Disordered" evidence="2">
    <location>
        <begin position="1"/>
        <end position="282"/>
    </location>
</feature>
<feature type="compositionally biased region" description="Acidic residues" evidence="2">
    <location>
        <begin position="16"/>
        <end position="29"/>
    </location>
</feature>
<feature type="compositionally biased region" description="Basic residues" evidence="2">
    <location>
        <begin position="70"/>
        <end position="87"/>
    </location>
</feature>
<feature type="compositionally biased region" description="Acidic residues" evidence="2">
    <location>
        <begin position="93"/>
        <end position="121"/>
    </location>
</feature>
<feature type="compositionally biased region" description="Basic residues" evidence="2">
    <location>
        <begin position="127"/>
        <end position="153"/>
    </location>
</feature>
<feature type="compositionally biased region" description="Basic and acidic residues" evidence="2">
    <location>
        <begin position="176"/>
        <end position="187"/>
    </location>
</feature>
<feature type="compositionally biased region" description="Basic and acidic residues" evidence="2">
    <location>
        <begin position="197"/>
        <end position="214"/>
    </location>
</feature>
<feature type="compositionally biased region" description="Basic residues" evidence="2">
    <location>
        <begin position="253"/>
        <end position="273"/>
    </location>
</feature>
<sequence>MPKKTATKANPKEVSDSENDSVVSEEEDNVPVTKGGKNAKASKAKPKEVSESDNSGSEQSEESEDEAPKKGKVNAKKAPAKKAPVKKGKQDSDSDNEEDEASEDGSDDEEDVVSADDSDSDEAPKGKAAKKAPAKKAPAKKAPAKKAPAKKGKAKDEDDESEDEAPKKGKGKGKATKKDGDKPKKPLSDYQKFLSKRMPELREEEPGKPYKEYMKMAGAEWTEQNGGTKKKPAAKSGSKTAKKAPAKGGSKSTAKKAPAKKAPAKKAPAKKSKKEASDEESD</sequence>
<evidence type="ECO:0000255" key="1">
    <source>
        <dbReference type="PROSITE-ProRule" id="PRU00267"/>
    </source>
</evidence>
<evidence type="ECO:0000256" key="2">
    <source>
        <dbReference type="SAM" id="MobiDB-lite"/>
    </source>
</evidence>
<proteinExistence type="predicted"/>
<keyword id="KW-0238">DNA-binding</keyword>
<keyword id="KW-1185">Reference proteome</keyword>
<name>YR545_MIMIV</name>